<accession>Q4FNH9</accession>
<evidence type="ECO:0000255" key="1">
    <source>
        <dbReference type="HAMAP-Rule" id="MF_00184"/>
    </source>
</evidence>
<evidence type="ECO:0000255" key="2">
    <source>
        <dbReference type="PROSITE-ProRule" id="PRU01228"/>
    </source>
</evidence>
<dbReference type="EC" id="6.1.1.3" evidence="1"/>
<dbReference type="EMBL" id="CP000084">
    <property type="protein sequence ID" value="AAZ21260.1"/>
    <property type="molecule type" value="Genomic_DNA"/>
</dbReference>
<dbReference type="RefSeq" id="WP_011281711.1">
    <property type="nucleotide sequence ID" value="NC_007205.1"/>
</dbReference>
<dbReference type="SMR" id="Q4FNH9"/>
<dbReference type="STRING" id="335992.SAR11_0438"/>
<dbReference type="GeneID" id="66294937"/>
<dbReference type="KEGG" id="pub:SAR11_0438"/>
<dbReference type="eggNOG" id="COG0441">
    <property type="taxonomic scope" value="Bacteria"/>
</dbReference>
<dbReference type="HOGENOM" id="CLU_008554_0_1_5"/>
<dbReference type="OrthoDB" id="9802304at2"/>
<dbReference type="Proteomes" id="UP000002528">
    <property type="component" value="Chromosome"/>
</dbReference>
<dbReference type="GO" id="GO:0005737">
    <property type="term" value="C:cytoplasm"/>
    <property type="evidence" value="ECO:0007669"/>
    <property type="project" value="UniProtKB-SubCell"/>
</dbReference>
<dbReference type="GO" id="GO:0005524">
    <property type="term" value="F:ATP binding"/>
    <property type="evidence" value="ECO:0007669"/>
    <property type="project" value="UniProtKB-UniRule"/>
</dbReference>
<dbReference type="GO" id="GO:0046872">
    <property type="term" value="F:metal ion binding"/>
    <property type="evidence" value="ECO:0007669"/>
    <property type="project" value="UniProtKB-KW"/>
</dbReference>
<dbReference type="GO" id="GO:0004829">
    <property type="term" value="F:threonine-tRNA ligase activity"/>
    <property type="evidence" value="ECO:0007669"/>
    <property type="project" value="UniProtKB-UniRule"/>
</dbReference>
<dbReference type="GO" id="GO:0000049">
    <property type="term" value="F:tRNA binding"/>
    <property type="evidence" value="ECO:0007669"/>
    <property type="project" value="UniProtKB-KW"/>
</dbReference>
<dbReference type="GO" id="GO:0006435">
    <property type="term" value="P:threonyl-tRNA aminoacylation"/>
    <property type="evidence" value="ECO:0007669"/>
    <property type="project" value="UniProtKB-UniRule"/>
</dbReference>
<dbReference type="CDD" id="cd01667">
    <property type="entry name" value="TGS_ThrRS"/>
    <property type="match status" value="1"/>
</dbReference>
<dbReference type="CDD" id="cd00860">
    <property type="entry name" value="ThrRS_anticodon"/>
    <property type="match status" value="1"/>
</dbReference>
<dbReference type="CDD" id="cd00771">
    <property type="entry name" value="ThrRS_core"/>
    <property type="match status" value="1"/>
</dbReference>
<dbReference type="FunFam" id="3.30.54.20:FF:000002">
    <property type="entry name" value="Threonine--tRNA ligase"/>
    <property type="match status" value="1"/>
</dbReference>
<dbReference type="FunFam" id="3.30.930.10:FF:000002">
    <property type="entry name" value="Threonine--tRNA ligase"/>
    <property type="match status" value="1"/>
</dbReference>
<dbReference type="FunFam" id="3.40.50.800:FF:000001">
    <property type="entry name" value="Threonine--tRNA ligase"/>
    <property type="match status" value="1"/>
</dbReference>
<dbReference type="FunFam" id="3.30.980.10:FF:000005">
    <property type="entry name" value="Threonyl-tRNA synthetase, mitochondrial"/>
    <property type="match status" value="1"/>
</dbReference>
<dbReference type="Gene3D" id="3.10.20.30">
    <property type="match status" value="1"/>
</dbReference>
<dbReference type="Gene3D" id="3.30.54.20">
    <property type="match status" value="1"/>
</dbReference>
<dbReference type="Gene3D" id="3.40.50.800">
    <property type="entry name" value="Anticodon-binding domain"/>
    <property type="match status" value="1"/>
</dbReference>
<dbReference type="Gene3D" id="3.30.930.10">
    <property type="entry name" value="Bira Bifunctional Protein, Domain 2"/>
    <property type="match status" value="1"/>
</dbReference>
<dbReference type="Gene3D" id="3.30.980.10">
    <property type="entry name" value="Threonyl-trna Synthetase, Chain A, domain 2"/>
    <property type="match status" value="1"/>
</dbReference>
<dbReference type="HAMAP" id="MF_00184">
    <property type="entry name" value="Thr_tRNA_synth"/>
    <property type="match status" value="1"/>
</dbReference>
<dbReference type="InterPro" id="IPR002314">
    <property type="entry name" value="aa-tRNA-synt_IIb"/>
</dbReference>
<dbReference type="InterPro" id="IPR006195">
    <property type="entry name" value="aa-tRNA-synth_II"/>
</dbReference>
<dbReference type="InterPro" id="IPR045864">
    <property type="entry name" value="aa-tRNA-synth_II/BPL/LPL"/>
</dbReference>
<dbReference type="InterPro" id="IPR004154">
    <property type="entry name" value="Anticodon-bd"/>
</dbReference>
<dbReference type="InterPro" id="IPR036621">
    <property type="entry name" value="Anticodon-bd_dom_sf"/>
</dbReference>
<dbReference type="InterPro" id="IPR012675">
    <property type="entry name" value="Beta-grasp_dom_sf"/>
</dbReference>
<dbReference type="InterPro" id="IPR004095">
    <property type="entry name" value="TGS"/>
</dbReference>
<dbReference type="InterPro" id="IPR012676">
    <property type="entry name" value="TGS-like"/>
</dbReference>
<dbReference type="InterPro" id="IPR002320">
    <property type="entry name" value="Thr-tRNA-ligase_IIa"/>
</dbReference>
<dbReference type="InterPro" id="IPR018163">
    <property type="entry name" value="Thr/Ala-tRNA-synth_IIc_edit"/>
</dbReference>
<dbReference type="InterPro" id="IPR047246">
    <property type="entry name" value="ThrRS_anticodon"/>
</dbReference>
<dbReference type="InterPro" id="IPR033728">
    <property type="entry name" value="ThrRS_core"/>
</dbReference>
<dbReference type="InterPro" id="IPR012947">
    <property type="entry name" value="tRNA_SAD"/>
</dbReference>
<dbReference type="NCBIfam" id="TIGR00418">
    <property type="entry name" value="thrS"/>
    <property type="match status" value="1"/>
</dbReference>
<dbReference type="PANTHER" id="PTHR11451:SF44">
    <property type="entry name" value="THREONINE--TRNA LIGASE, CHLOROPLASTIC_MITOCHONDRIAL 2"/>
    <property type="match status" value="1"/>
</dbReference>
<dbReference type="PANTHER" id="PTHR11451">
    <property type="entry name" value="THREONINE-TRNA LIGASE"/>
    <property type="match status" value="1"/>
</dbReference>
<dbReference type="Pfam" id="PF03129">
    <property type="entry name" value="HGTP_anticodon"/>
    <property type="match status" value="1"/>
</dbReference>
<dbReference type="Pfam" id="PF02824">
    <property type="entry name" value="TGS"/>
    <property type="match status" value="1"/>
</dbReference>
<dbReference type="Pfam" id="PF00587">
    <property type="entry name" value="tRNA-synt_2b"/>
    <property type="match status" value="1"/>
</dbReference>
<dbReference type="Pfam" id="PF07973">
    <property type="entry name" value="tRNA_SAD"/>
    <property type="match status" value="1"/>
</dbReference>
<dbReference type="PRINTS" id="PR01047">
    <property type="entry name" value="TRNASYNTHTHR"/>
</dbReference>
<dbReference type="SMART" id="SM00863">
    <property type="entry name" value="tRNA_SAD"/>
    <property type="match status" value="1"/>
</dbReference>
<dbReference type="SUPFAM" id="SSF52954">
    <property type="entry name" value="Class II aaRS ABD-related"/>
    <property type="match status" value="1"/>
</dbReference>
<dbReference type="SUPFAM" id="SSF55681">
    <property type="entry name" value="Class II aaRS and biotin synthetases"/>
    <property type="match status" value="1"/>
</dbReference>
<dbReference type="SUPFAM" id="SSF81271">
    <property type="entry name" value="TGS-like"/>
    <property type="match status" value="1"/>
</dbReference>
<dbReference type="SUPFAM" id="SSF55186">
    <property type="entry name" value="ThrRS/AlaRS common domain"/>
    <property type="match status" value="1"/>
</dbReference>
<dbReference type="PROSITE" id="PS50862">
    <property type="entry name" value="AA_TRNA_LIGASE_II"/>
    <property type="match status" value="1"/>
</dbReference>
<dbReference type="PROSITE" id="PS51880">
    <property type="entry name" value="TGS"/>
    <property type="match status" value="1"/>
</dbReference>
<gene>
    <name evidence="1" type="primary">thrS</name>
    <name type="ordered locus">SAR11_0438</name>
</gene>
<organism>
    <name type="scientific">Pelagibacter ubique (strain HTCC1062)</name>
    <dbReference type="NCBI Taxonomy" id="335992"/>
    <lineage>
        <taxon>Bacteria</taxon>
        <taxon>Pseudomonadati</taxon>
        <taxon>Pseudomonadota</taxon>
        <taxon>Alphaproteobacteria</taxon>
        <taxon>Candidatus Pelagibacterales</taxon>
        <taxon>Candidatus Pelagibacteraceae</taxon>
        <taxon>Candidatus Pelagibacter</taxon>
    </lineage>
</organism>
<keyword id="KW-0030">Aminoacyl-tRNA synthetase</keyword>
<keyword id="KW-0067">ATP-binding</keyword>
<keyword id="KW-0963">Cytoplasm</keyword>
<keyword id="KW-0436">Ligase</keyword>
<keyword id="KW-0479">Metal-binding</keyword>
<keyword id="KW-0547">Nucleotide-binding</keyword>
<keyword id="KW-0648">Protein biosynthesis</keyword>
<keyword id="KW-1185">Reference proteome</keyword>
<keyword id="KW-0694">RNA-binding</keyword>
<keyword id="KW-0820">tRNA-binding</keyword>
<keyword id="KW-0862">Zinc</keyword>
<sequence>MPLITLPDGNTIEFPNKVTGLEVAEKISKSLSKQATIISVNEELKDLSFVLDKDCSVKIFTSKDKEGLETIRHDTAHITAMAVQELFPGTQVTIGPIIENGFYYDFSRKEPFTEDDLNKIENKMKEIVDRDVPTTREVWKRDKAISHFKDKGEIYKAEIIESIPQGEDVSIYFHGDWHDLCRGPHLSSTGKIGKYFKLTKVSGAYWRGDSNNEMLQRIYGTSWASQKDLDEYLKRIEEAEKRDHRKLGKEMDLFHFREESPGSVFWHEKGWKLFQKLVAYMRARQEKAGYKEVNTPEILDRSLWEKSGHWEKYGEHMYTSQTPDEKIFAIKPMNCPGHVQVFNQGLKSYRDLPLRISEFGKVHRYEPSGALHGLLRVRAFTQDDAHIFCTEDQITSECLIVTNLILDIYKDLGFEDVILKYSDRPDLRVGDDNVWDKAEKALLDAVKASKLQYTINKGEGAFYGPKIEFVLRDAIGRDWQCGTLQVDLNLPGRLDASFVDKDGTKKIPVMLHRALFGSLERFIGILIENYAGKFPFWIAPLQVVVIPISEEFDSYAKEVNEKINNAGISSEVDLKNHNLNYKIREHSLSKIPLLLICGKKEVDSNSVTIRRLDTNKQENMELNLFLETFSALNKASSN</sequence>
<protein>
    <recommendedName>
        <fullName evidence="1">Threonine--tRNA ligase</fullName>
        <ecNumber evidence="1">6.1.1.3</ecNumber>
    </recommendedName>
    <alternativeName>
        <fullName evidence="1">Threonyl-tRNA synthetase</fullName>
        <shortName evidence="1">ThrRS</shortName>
    </alternativeName>
</protein>
<feature type="chain" id="PRO_1000098592" description="Threonine--tRNA ligase">
    <location>
        <begin position="1"/>
        <end position="638"/>
    </location>
</feature>
<feature type="domain" description="TGS" evidence="2">
    <location>
        <begin position="1"/>
        <end position="61"/>
    </location>
</feature>
<feature type="region of interest" description="Catalytic" evidence="1">
    <location>
        <begin position="243"/>
        <end position="535"/>
    </location>
</feature>
<feature type="binding site" evidence="1">
    <location>
        <position position="335"/>
    </location>
    <ligand>
        <name>Zn(2+)</name>
        <dbReference type="ChEBI" id="CHEBI:29105"/>
    </ligand>
</feature>
<feature type="binding site" evidence="1">
    <location>
        <position position="386"/>
    </location>
    <ligand>
        <name>Zn(2+)</name>
        <dbReference type="ChEBI" id="CHEBI:29105"/>
    </ligand>
</feature>
<feature type="binding site" evidence="1">
    <location>
        <position position="512"/>
    </location>
    <ligand>
        <name>Zn(2+)</name>
        <dbReference type="ChEBI" id="CHEBI:29105"/>
    </ligand>
</feature>
<proteinExistence type="inferred from homology"/>
<reference key="1">
    <citation type="journal article" date="2005" name="Science">
        <title>Genome streamlining in a cosmopolitan oceanic bacterium.</title>
        <authorList>
            <person name="Giovannoni S.J."/>
            <person name="Tripp H.J."/>
            <person name="Givan S."/>
            <person name="Podar M."/>
            <person name="Vergin K.L."/>
            <person name="Baptista D."/>
            <person name="Bibbs L."/>
            <person name="Eads J."/>
            <person name="Richardson T.H."/>
            <person name="Noordewier M."/>
            <person name="Rappe M.S."/>
            <person name="Short J.M."/>
            <person name="Carrington J.C."/>
            <person name="Mathur E.J."/>
        </authorList>
    </citation>
    <scope>NUCLEOTIDE SEQUENCE [LARGE SCALE GENOMIC DNA]</scope>
    <source>
        <strain>HTCC1062</strain>
    </source>
</reference>
<name>SYT_PELUB</name>
<comment type="function">
    <text evidence="1">Catalyzes the attachment of threonine to tRNA(Thr) in a two-step reaction: L-threonine is first activated by ATP to form Thr-AMP and then transferred to the acceptor end of tRNA(Thr). Also edits incorrectly charged L-seryl-tRNA(Thr).</text>
</comment>
<comment type="catalytic activity">
    <reaction evidence="1">
        <text>tRNA(Thr) + L-threonine + ATP = L-threonyl-tRNA(Thr) + AMP + diphosphate + H(+)</text>
        <dbReference type="Rhea" id="RHEA:24624"/>
        <dbReference type="Rhea" id="RHEA-COMP:9670"/>
        <dbReference type="Rhea" id="RHEA-COMP:9704"/>
        <dbReference type="ChEBI" id="CHEBI:15378"/>
        <dbReference type="ChEBI" id="CHEBI:30616"/>
        <dbReference type="ChEBI" id="CHEBI:33019"/>
        <dbReference type="ChEBI" id="CHEBI:57926"/>
        <dbReference type="ChEBI" id="CHEBI:78442"/>
        <dbReference type="ChEBI" id="CHEBI:78534"/>
        <dbReference type="ChEBI" id="CHEBI:456215"/>
        <dbReference type="EC" id="6.1.1.3"/>
    </reaction>
</comment>
<comment type="cofactor">
    <cofactor evidence="1">
        <name>Zn(2+)</name>
        <dbReference type="ChEBI" id="CHEBI:29105"/>
    </cofactor>
    <text evidence="1">Binds 1 zinc ion per subunit.</text>
</comment>
<comment type="subunit">
    <text evidence="1">Homodimer.</text>
</comment>
<comment type="subcellular location">
    <subcellularLocation>
        <location evidence="1">Cytoplasm</location>
    </subcellularLocation>
</comment>
<comment type="similarity">
    <text evidence="1">Belongs to the class-II aminoacyl-tRNA synthetase family.</text>
</comment>